<reference key="1">
    <citation type="submission" date="2006-10" db="EMBL/GenBank/DDBJ databases">
        <authorList>
            <person name="Fleischmann R.D."/>
            <person name="Dodson R.J."/>
            <person name="Haft D.H."/>
            <person name="Merkel J.S."/>
            <person name="Nelson W.C."/>
            <person name="Fraser C.M."/>
        </authorList>
    </citation>
    <scope>NUCLEOTIDE SEQUENCE [LARGE SCALE GENOMIC DNA]</scope>
    <source>
        <strain>104</strain>
    </source>
</reference>
<accession>A0Q994</accession>
<organism>
    <name type="scientific">Mycobacterium avium (strain 104)</name>
    <dbReference type="NCBI Taxonomy" id="243243"/>
    <lineage>
        <taxon>Bacteria</taxon>
        <taxon>Bacillati</taxon>
        <taxon>Actinomycetota</taxon>
        <taxon>Actinomycetes</taxon>
        <taxon>Mycobacteriales</taxon>
        <taxon>Mycobacteriaceae</taxon>
        <taxon>Mycobacterium</taxon>
        <taxon>Mycobacterium avium complex (MAC)</taxon>
    </lineage>
</organism>
<name>PHEA_MYCA1</name>
<comment type="catalytic activity">
    <reaction>
        <text>prephenate + H(+) = 3-phenylpyruvate + CO2 + H2O</text>
        <dbReference type="Rhea" id="RHEA:21648"/>
        <dbReference type="ChEBI" id="CHEBI:15377"/>
        <dbReference type="ChEBI" id="CHEBI:15378"/>
        <dbReference type="ChEBI" id="CHEBI:16526"/>
        <dbReference type="ChEBI" id="CHEBI:18005"/>
        <dbReference type="ChEBI" id="CHEBI:29934"/>
        <dbReference type="EC" id="4.2.1.51"/>
    </reaction>
</comment>
<comment type="pathway">
    <text>Amino-acid biosynthesis; L-phenylalanine biosynthesis; phenylpyruvate from prephenate: step 1/1.</text>
</comment>
<comment type="subunit">
    <text evidence="1">Homodimer.</text>
</comment>
<dbReference type="EC" id="4.2.1.51"/>
<dbReference type="EMBL" id="CP000479">
    <property type="protein sequence ID" value="ABK64544.1"/>
    <property type="molecule type" value="Genomic_DNA"/>
</dbReference>
<dbReference type="RefSeq" id="WP_003872300.1">
    <property type="nucleotide sequence ID" value="NC_008595.1"/>
</dbReference>
<dbReference type="SMR" id="A0Q994"/>
<dbReference type="GeneID" id="75268108"/>
<dbReference type="KEGG" id="mav:MAV_0188"/>
<dbReference type="HOGENOM" id="CLU_035008_0_0_11"/>
<dbReference type="UniPathway" id="UPA00121">
    <property type="reaction ID" value="UER00345"/>
</dbReference>
<dbReference type="Proteomes" id="UP000001574">
    <property type="component" value="Chromosome"/>
</dbReference>
<dbReference type="GO" id="GO:0005737">
    <property type="term" value="C:cytoplasm"/>
    <property type="evidence" value="ECO:0007669"/>
    <property type="project" value="TreeGrafter"/>
</dbReference>
<dbReference type="GO" id="GO:0004664">
    <property type="term" value="F:prephenate dehydratase activity"/>
    <property type="evidence" value="ECO:0007669"/>
    <property type="project" value="UniProtKB-EC"/>
</dbReference>
<dbReference type="GO" id="GO:0042803">
    <property type="term" value="F:protein homodimerization activity"/>
    <property type="evidence" value="ECO:0000250"/>
    <property type="project" value="UniProtKB"/>
</dbReference>
<dbReference type="GO" id="GO:0009094">
    <property type="term" value="P:L-phenylalanine biosynthetic process"/>
    <property type="evidence" value="ECO:0007669"/>
    <property type="project" value="UniProtKB-UniPathway"/>
</dbReference>
<dbReference type="CDD" id="cd04905">
    <property type="entry name" value="ACT_CM-PDT"/>
    <property type="match status" value="1"/>
</dbReference>
<dbReference type="CDD" id="cd13632">
    <property type="entry name" value="PBP2_Aa-PDT_like"/>
    <property type="match status" value="1"/>
</dbReference>
<dbReference type="FunFam" id="3.30.70.260:FF:000012">
    <property type="entry name" value="Prephenate dehydratase"/>
    <property type="match status" value="1"/>
</dbReference>
<dbReference type="FunFam" id="3.40.190.10:FF:000064">
    <property type="entry name" value="Prephenate dehydratase"/>
    <property type="match status" value="1"/>
</dbReference>
<dbReference type="FunFam" id="3.40.190.10:FF:000146">
    <property type="entry name" value="Prephenate dehydratase"/>
    <property type="match status" value="1"/>
</dbReference>
<dbReference type="Gene3D" id="3.30.70.260">
    <property type="match status" value="1"/>
</dbReference>
<dbReference type="Gene3D" id="3.40.190.10">
    <property type="entry name" value="Periplasmic binding protein-like II"/>
    <property type="match status" value="2"/>
</dbReference>
<dbReference type="InterPro" id="IPR045865">
    <property type="entry name" value="ACT-like_dom_sf"/>
</dbReference>
<dbReference type="InterPro" id="IPR002912">
    <property type="entry name" value="ACT_dom"/>
</dbReference>
<dbReference type="InterPro" id="IPR008242">
    <property type="entry name" value="Chor_mutase/pphenate_deHydtase"/>
</dbReference>
<dbReference type="InterPro" id="IPR001086">
    <property type="entry name" value="Preph_deHydtase"/>
</dbReference>
<dbReference type="InterPro" id="IPR018528">
    <property type="entry name" value="Preph_deHydtase_CS"/>
</dbReference>
<dbReference type="NCBIfam" id="NF008865">
    <property type="entry name" value="PRK11898.1"/>
    <property type="match status" value="1"/>
</dbReference>
<dbReference type="PANTHER" id="PTHR21022">
    <property type="entry name" value="PREPHENATE DEHYDRATASE P PROTEIN"/>
    <property type="match status" value="1"/>
</dbReference>
<dbReference type="PANTHER" id="PTHR21022:SF19">
    <property type="entry name" value="PREPHENATE DEHYDRATASE-RELATED"/>
    <property type="match status" value="1"/>
</dbReference>
<dbReference type="Pfam" id="PF01842">
    <property type="entry name" value="ACT"/>
    <property type="match status" value="1"/>
</dbReference>
<dbReference type="Pfam" id="PF00800">
    <property type="entry name" value="PDT"/>
    <property type="match status" value="1"/>
</dbReference>
<dbReference type="PIRSF" id="PIRSF001500">
    <property type="entry name" value="Chor_mut_pdt_Ppr"/>
    <property type="match status" value="1"/>
</dbReference>
<dbReference type="SUPFAM" id="SSF55021">
    <property type="entry name" value="ACT-like"/>
    <property type="match status" value="1"/>
</dbReference>
<dbReference type="SUPFAM" id="SSF53850">
    <property type="entry name" value="Periplasmic binding protein-like II"/>
    <property type="match status" value="1"/>
</dbReference>
<dbReference type="PROSITE" id="PS51671">
    <property type="entry name" value="ACT"/>
    <property type="match status" value="1"/>
</dbReference>
<dbReference type="PROSITE" id="PS00858">
    <property type="entry name" value="PREPHENATE_DEHYDR_2"/>
    <property type="match status" value="1"/>
</dbReference>
<dbReference type="PROSITE" id="PS51171">
    <property type="entry name" value="PREPHENATE_DEHYDR_3"/>
    <property type="match status" value="1"/>
</dbReference>
<sequence length="315" mass="32562">MARIAYLGPEGTFTEAALRQITAAGLVPGQGADGVRPTPVDGTPAALDAVRDGAADYACVPIENSIDGSVTPTLDSLAIGSPLQVFAETTLDVAFSIVVKPGLSAADVRTLAAIGVAAAQVRQWVAANLAGAQLRPAYSNADAAQQVAEGRADAAVTSPLAAARWGLDTLADGVVDEPNARTRFVLVGPPAPPPARTGADRTSVVLRIDNAPGALLAALAEFGIRGIDLTRIESRPTRTGLGIYRFFADCVGHIDDEPVAEALKALHRRCADVRYLGSWPTGTPAGALPPSTEEAVRWLAAVRDGKPEPPGESRR</sequence>
<proteinExistence type="inferred from homology"/>
<keyword id="KW-0028">Amino-acid biosynthesis</keyword>
<keyword id="KW-0057">Aromatic amino acid biosynthesis</keyword>
<keyword id="KW-0456">Lyase</keyword>
<keyword id="KW-0584">Phenylalanine biosynthesis</keyword>
<gene>
    <name type="primary">pheA</name>
    <name type="ordered locus">MAV_0188</name>
</gene>
<evidence type="ECO:0000250" key="1"/>
<evidence type="ECO:0000255" key="2">
    <source>
        <dbReference type="PROSITE-ProRule" id="PRU00517"/>
    </source>
</evidence>
<evidence type="ECO:0000255" key="3">
    <source>
        <dbReference type="PROSITE-ProRule" id="PRU01007"/>
    </source>
</evidence>
<protein>
    <recommendedName>
        <fullName>Prephenate dehydratase</fullName>
        <shortName>PDT</shortName>
        <ecNumber>4.2.1.51</ecNumber>
    </recommendedName>
</protein>
<feature type="chain" id="PRO_0000382031" description="Prephenate dehydratase">
    <location>
        <begin position="1"/>
        <end position="315"/>
    </location>
</feature>
<feature type="domain" description="Prephenate dehydratase" evidence="2">
    <location>
        <begin position="3"/>
        <end position="189"/>
    </location>
</feature>
<feature type="domain" description="ACT" evidence="3">
    <location>
        <begin position="203"/>
        <end position="280"/>
    </location>
</feature>
<feature type="site" description="Essential for activity" evidence="1">
    <location>
        <position position="182"/>
    </location>
</feature>